<evidence type="ECO:0000255" key="1"/>
<evidence type="ECO:0000305" key="2"/>
<organism>
    <name type="scientific">Erwinia amylovora</name>
    <name type="common">Fire blight bacteria</name>
    <dbReference type="NCBI Taxonomy" id="552"/>
    <lineage>
        <taxon>Bacteria</taxon>
        <taxon>Pseudomonadati</taxon>
        <taxon>Pseudomonadota</taxon>
        <taxon>Gammaproteobacteria</taxon>
        <taxon>Enterobacterales</taxon>
        <taxon>Erwiniaceae</taxon>
        <taxon>Erwinia</taxon>
    </lineage>
</organism>
<keyword id="KW-1003">Cell membrane</keyword>
<keyword id="KW-0270">Exopolysaccharide synthesis</keyword>
<keyword id="KW-0472">Membrane</keyword>
<keyword id="KW-0812">Transmembrane</keyword>
<keyword id="KW-1133">Transmembrane helix</keyword>
<keyword id="KW-0843">Virulence</keyword>
<comment type="function">
    <text>Involved in the biosynthesis of amylovoran which functions as a virulence factor.</text>
</comment>
<comment type="pathway">
    <text>Glycan metabolism; exopolysaccharide biosynthesis.</text>
</comment>
<comment type="subcellular location">
    <subcellularLocation>
        <location evidence="2">Cell membrane</location>
        <topology evidence="2">Multi-pass membrane protein</topology>
    </subcellularLocation>
</comment>
<proteinExistence type="predicted"/>
<sequence>MAIYWIVSYSILVFCFFELAMINQASEAKTKILINYFFLIGVFALILFAGIRGPDSGMDDSQYVGFFHDFSRQTGMTGYQAVANIYRYENFFMVLAWVASCFTHESYFFLLFISFIAVSTNAWVYKKYSPLILCSLCLYSAHLFINKDMNQIRFGLCSAFAIAFICSLVARNYLLALLFIVLSTQSHSTGYTIVMIIPFFFIRERKYLPLVLVIASIPLGIIGGKKLFLDSLGIVPVLGERAASYSGTNFDTTSPVFGLANLKNIAFIGAFTLYYFRKGIMKEDRFVYILLIAYSIGAAVRITFSDFSIFGGRVGNLFLHTEPLLFAFLMLRIRNLLLNFFMLFSITTYYLAYNTILSAQSIMGYSVAPLFRIFS</sequence>
<feature type="chain" id="PRO_0000064594" description="Amylovoran biosynthesis protein AmsC">
    <location>
        <begin position="1"/>
        <end position="375"/>
    </location>
</feature>
<feature type="transmembrane region" description="Helical" evidence="1">
    <location>
        <begin position="2"/>
        <end position="22"/>
    </location>
</feature>
<feature type="transmembrane region" description="Helical" evidence="1">
    <location>
        <begin position="31"/>
        <end position="51"/>
    </location>
</feature>
<feature type="transmembrane region" description="Helical" evidence="1">
    <location>
        <begin position="93"/>
        <end position="113"/>
    </location>
</feature>
<feature type="transmembrane region" description="Helical" evidence="1">
    <location>
        <begin position="162"/>
        <end position="182"/>
    </location>
</feature>
<feature type="transmembrane region" description="Helical" evidence="1">
    <location>
        <begin position="208"/>
        <end position="228"/>
    </location>
</feature>
<feature type="transmembrane region" description="Helical" evidence="1">
    <location>
        <begin position="256"/>
        <end position="276"/>
    </location>
</feature>
<feature type="transmembrane region" description="Helical" evidence="1">
    <location>
        <begin position="287"/>
        <end position="307"/>
    </location>
</feature>
<feature type="transmembrane region" description="Helical" evidence="1">
    <location>
        <begin position="309"/>
        <end position="329"/>
    </location>
</feature>
<feature type="transmembrane region" description="Helical" evidence="1">
    <location>
        <begin position="337"/>
        <end position="357"/>
    </location>
</feature>
<gene>
    <name type="primary">amsC</name>
</gene>
<reference key="1">
    <citation type="journal article" date="1995" name="Mol. Microbiol.">
        <title>Molecular analysis of the ams operon required for exopolysaccharide synthesis of Erwinia amylovora.</title>
        <authorList>
            <person name="Bugert P."/>
            <person name="Geider K."/>
        </authorList>
    </citation>
    <scope>NUCLEOTIDE SEQUENCE [GENOMIC DNA]</scope>
    <source>
        <strain>EA1/79</strain>
    </source>
</reference>
<reference key="2">
    <citation type="submission" date="2011-08" db="EMBL/GenBank/DDBJ databases">
        <authorList>
            <person name="Geider K.K."/>
        </authorList>
    </citation>
    <scope>SEQUENCE REVISION TO 261 AND 360</scope>
</reference>
<dbReference type="EMBL" id="X77921">
    <property type="protein sequence ID" value="CAA54884.2"/>
    <property type="molecule type" value="Genomic_DNA"/>
</dbReference>
<dbReference type="PIR" id="S61896">
    <property type="entry name" value="S52143"/>
</dbReference>
<dbReference type="RefSeq" id="WP_004158324.1">
    <property type="nucleotide sequence ID" value="NZ_RQKG01000006.1"/>
</dbReference>
<dbReference type="OMA" id="YYLYYNT"/>
<dbReference type="UniPathway" id="UPA00631"/>
<dbReference type="GO" id="GO:0005886">
    <property type="term" value="C:plasma membrane"/>
    <property type="evidence" value="ECO:0007669"/>
    <property type="project" value="UniProtKB-SubCell"/>
</dbReference>
<dbReference type="GO" id="GO:0000271">
    <property type="term" value="P:polysaccharide biosynthetic process"/>
    <property type="evidence" value="ECO:0007669"/>
    <property type="project" value="UniProtKB-KW"/>
</dbReference>
<dbReference type="InterPro" id="IPR049458">
    <property type="entry name" value="EpsG-like"/>
</dbReference>
<dbReference type="Pfam" id="PF14897">
    <property type="entry name" value="EpsG"/>
    <property type="match status" value="1"/>
</dbReference>
<accession>Q46633</accession>
<protein>
    <recommendedName>
        <fullName>Amylovoran biosynthesis protein AmsC</fullName>
    </recommendedName>
</protein>
<name>AMSC_ERWAM</name>